<reference key="1">
    <citation type="submission" date="2008-04" db="EMBL/GenBank/DDBJ databases">
        <title>Complete sequence of chromosome 1 of Burkholderia ambifaria MC40-6.</title>
        <authorList>
            <person name="Copeland A."/>
            <person name="Lucas S."/>
            <person name="Lapidus A."/>
            <person name="Glavina del Rio T."/>
            <person name="Dalin E."/>
            <person name="Tice H."/>
            <person name="Pitluck S."/>
            <person name="Chain P."/>
            <person name="Malfatti S."/>
            <person name="Shin M."/>
            <person name="Vergez L."/>
            <person name="Lang D."/>
            <person name="Schmutz J."/>
            <person name="Larimer F."/>
            <person name="Land M."/>
            <person name="Hauser L."/>
            <person name="Kyrpides N."/>
            <person name="Lykidis A."/>
            <person name="Ramette A."/>
            <person name="Konstantinidis K."/>
            <person name="Tiedje J."/>
            <person name="Richardson P."/>
        </authorList>
    </citation>
    <scope>NUCLEOTIDE SEQUENCE [LARGE SCALE GENOMIC DNA]</scope>
    <source>
        <strain>MC40-6</strain>
    </source>
</reference>
<protein>
    <recommendedName>
        <fullName evidence="1">Aspartate carbamoyltransferase catalytic subunit</fullName>
        <ecNumber evidence="1">2.1.3.2</ecNumber>
    </recommendedName>
    <alternativeName>
        <fullName evidence="1">Aspartate transcarbamylase</fullName>
        <shortName evidence="1">ATCase</shortName>
    </alternativeName>
</protein>
<accession>B1YU30</accession>
<dbReference type="EC" id="2.1.3.2" evidence="1"/>
<dbReference type="EMBL" id="CP001025">
    <property type="protein sequence ID" value="ACB63253.1"/>
    <property type="molecule type" value="Genomic_DNA"/>
</dbReference>
<dbReference type="RefSeq" id="WP_006751103.1">
    <property type="nucleotide sequence ID" value="NC_010551.1"/>
</dbReference>
<dbReference type="SMR" id="B1YU30"/>
<dbReference type="KEGG" id="bac:BamMC406_0757"/>
<dbReference type="HOGENOM" id="CLU_043846_2_0_4"/>
<dbReference type="OrthoDB" id="9774690at2"/>
<dbReference type="UniPathway" id="UPA00070">
    <property type="reaction ID" value="UER00116"/>
</dbReference>
<dbReference type="Proteomes" id="UP000001680">
    <property type="component" value="Chromosome 1"/>
</dbReference>
<dbReference type="GO" id="GO:0005829">
    <property type="term" value="C:cytosol"/>
    <property type="evidence" value="ECO:0007669"/>
    <property type="project" value="TreeGrafter"/>
</dbReference>
<dbReference type="GO" id="GO:0016597">
    <property type="term" value="F:amino acid binding"/>
    <property type="evidence" value="ECO:0007669"/>
    <property type="project" value="InterPro"/>
</dbReference>
<dbReference type="GO" id="GO:0004070">
    <property type="term" value="F:aspartate carbamoyltransferase activity"/>
    <property type="evidence" value="ECO:0007669"/>
    <property type="project" value="UniProtKB-UniRule"/>
</dbReference>
<dbReference type="GO" id="GO:0006207">
    <property type="term" value="P:'de novo' pyrimidine nucleobase biosynthetic process"/>
    <property type="evidence" value="ECO:0007669"/>
    <property type="project" value="InterPro"/>
</dbReference>
<dbReference type="GO" id="GO:0044205">
    <property type="term" value="P:'de novo' UMP biosynthetic process"/>
    <property type="evidence" value="ECO:0007669"/>
    <property type="project" value="UniProtKB-UniRule"/>
</dbReference>
<dbReference type="GO" id="GO:0006520">
    <property type="term" value="P:amino acid metabolic process"/>
    <property type="evidence" value="ECO:0007669"/>
    <property type="project" value="InterPro"/>
</dbReference>
<dbReference type="FunFam" id="3.40.50.1370:FF:000007">
    <property type="entry name" value="Aspartate carbamoyltransferase"/>
    <property type="match status" value="1"/>
</dbReference>
<dbReference type="Gene3D" id="3.40.50.1370">
    <property type="entry name" value="Aspartate/ornithine carbamoyltransferase"/>
    <property type="match status" value="2"/>
</dbReference>
<dbReference type="HAMAP" id="MF_00001">
    <property type="entry name" value="Asp_carb_tr"/>
    <property type="match status" value="1"/>
</dbReference>
<dbReference type="InterPro" id="IPR006132">
    <property type="entry name" value="Asp/Orn_carbamoyltranf_P-bd"/>
</dbReference>
<dbReference type="InterPro" id="IPR006130">
    <property type="entry name" value="Asp/Orn_carbamoylTrfase"/>
</dbReference>
<dbReference type="InterPro" id="IPR036901">
    <property type="entry name" value="Asp/Orn_carbamoylTrfase_sf"/>
</dbReference>
<dbReference type="InterPro" id="IPR002082">
    <property type="entry name" value="Asp_carbamoyltransf"/>
</dbReference>
<dbReference type="InterPro" id="IPR006131">
    <property type="entry name" value="Asp_carbamoyltransf_Asp/Orn-bd"/>
</dbReference>
<dbReference type="NCBIfam" id="TIGR00670">
    <property type="entry name" value="asp_carb_tr"/>
    <property type="match status" value="1"/>
</dbReference>
<dbReference type="NCBIfam" id="NF002032">
    <property type="entry name" value="PRK00856.1"/>
    <property type="match status" value="1"/>
</dbReference>
<dbReference type="PANTHER" id="PTHR45753:SF6">
    <property type="entry name" value="ASPARTATE CARBAMOYLTRANSFERASE"/>
    <property type="match status" value="1"/>
</dbReference>
<dbReference type="PANTHER" id="PTHR45753">
    <property type="entry name" value="ORNITHINE CARBAMOYLTRANSFERASE, MITOCHONDRIAL"/>
    <property type="match status" value="1"/>
</dbReference>
<dbReference type="Pfam" id="PF00185">
    <property type="entry name" value="OTCace"/>
    <property type="match status" value="1"/>
</dbReference>
<dbReference type="Pfam" id="PF02729">
    <property type="entry name" value="OTCace_N"/>
    <property type="match status" value="1"/>
</dbReference>
<dbReference type="PRINTS" id="PR00100">
    <property type="entry name" value="AOTCASE"/>
</dbReference>
<dbReference type="PRINTS" id="PR00101">
    <property type="entry name" value="ATCASE"/>
</dbReference>
<dbReference type="SUPFAM" id="SSF53671">
    <property type="entry name" value="Aspartate/ornithine carbamoyltransferase"/>
    <property type="match status" value="1"/>
</dbReference>
<dbReference type="PROSITE" id="PS00097">
    <property type="entry name" value="CARBAMOYLTRANSFERASE"/>
    <property type="match status" value="1"/>
</dbReference>
<sequence length="343" mass="37277">MTTDTTGRTGNPAAAASPERFRYGFLKGNPQLTKNGELKHLLSIEGLPRSIVNHILDTAEQFVSVTDREVKKVPLLRGKSVFNLFFENSTRTRTTFEIAATRLSADVLNLNINASSTSKGESLLDTINNLSAMHADLFVVRHASSGAPYLIAEHCAPHVHVINAGDGRHAHPTQGLLDMYTIRHYKRDFTKLRVAIVGDILHSRVARSDIHALTTLGVPEVRAIGPRTLLPGGLEQMGVKVFNNLDEGLKGVDVIIMLRLQNERMSGALLPSAQEYFKTWGLTPERLALAAPDAIVMHPGPMNRGVEIDSQVADGPQSVILNQVTFGIAVRMAVMGIVAGNSD</sequence>
<name>PYRB_BURA4</name>
<organism>
    <name type="scientific">Burkholderia ambifaria (strain MC40-6)</name>
    <dbReference type="NCBI Taxonomy" id="398577"/>
    <lineage>
        <taxon>Bacteria</taxon>
        <taxon>Pseudomonadati</taxon>
        <taxon>Pseudomonadota</taxon>
        <taxon>Betaproteobacteria</taxon>
        <taxon>Burkholderiales</taxon>
        <taxon>Burkholderiaceae</taxon>
        <taxon>Burkholderia</taxon>
        <taxon>Burkholderia cepacia complex</taxon>
    </lineage>
</organism>
<evidence type="ECO:0000255" key="1">
    <source>
        <dbReference type="HAMAP-Rule" id="MF_00001"/>
    </source>
</evidence>
<feature type="chain" id="PRO_1000088741" description="Aspartate carbamoyltransferase catalytic subunit">
    <location>
        <begin position="1"/>
        <end position="343"/>
    </location>
</feature>
<feature type="binding site" evidence="1">
    <location>
        <position position="91"/>
    </location>
    <ligand>
        <name>carbamoyl phosphate</name>
        <dbReference type="ChEBI" id="CHEBI:58228"/>
    </ligand>
</feature>
<feature type="binding site" evidence="1">
    <location>
        <position position="92"/>
    </location>
    <ligand>
        <name>carbamoyl phosphate</name>
        <dbReference type="ChEBI" id="CHEBI:58228"/>
    </ligand>
</feature>
<feature type="binding site" evidence="1">
    <location>
        <position position="119"/>
    </location>
    <ligand>
        <name>L-aspartate</name>
        <dbReference type="ChEBI" id="CHEBI:29991"/>
    </ligand>
</feature>
<feature type="binding site" evidence="1">
    <location>
        <position position="141"/>
    </location>
    <ligand>
        <name>carbamoyl phosphate</name>
        <dbReference type="ChEBI" id="CHEBI:58228"/>
    </ligand>
</feature>
<feature type="binding site" evidence="1">
    <location>
        <position position="171"/>
    </location>
    <ligand>
        <name>carbamoyl phosphate</name>
        <dbReference type="ChEBI" id="CHEBI:58228"/>
    </ligand>
</feature>
<feature type="binding site" evidence="1">
    <location>
        <position position="174"/>
    </location>
    <ligand>
        <name>carbamoyl phosphate</name>
        <dbReference type="ChEBI" id="CHEBI:58228"/>
    </ligand>
</feature>
<feature type="binding site" evidence="1">
    <location>
        <position position="204"/>
    </location>
    <ligand>
        <name>L-aspartate</name>
        <dbReference type="ChEBI" id="CHEBI:29991"/>
    </ligand>
</feature>
<feature type="binding site" evidence="1">
    <location>
        <position position="259"/>
    </location>
    <ligand>
        <name>L-aspartate</name>
        <dbReference type="ChEBI" id="CHEBI:29991"/>
    </ligand>
</feature>
<feature type="binding site" evidence="1">
    <location>
        <position position="300"/>
    </location>
    <ligand>
        <name>carbamoyl phosphate</name>
        <dbReference type="ChEBI" id="CHEBI:58228"/>
    </ligand>
</feature>
<feature type="binding site" evidence="1">
    <location>
        <position position="301"/>
    </location>
    <ligand>
        <name>carbamoyl phosphate</name>
        <dbReference type="ChEBI" id="CHEBI:58228"/>
    </ligand>
</feature>
<gene>
    <name evidence="1" type="primary">pyrB</name>
    <name type="ordered locus">BamMC406_0757</name>
</gene>
<proteinExistence type="inferred from homology"/>
<keyword id="KW-0665">Pyrimidine biosynthesis</keyword>
<keyword id="KW-0808">Transferase</keyword>
<comment type="function">
    <text evidence="1">Catalyzes the condensation of carbamoyl phosphate and aspartate to form carbamoyl aspartate and inorganic phosphate, the committed step in the de novo pyrimidine nucleotide biosynthesis pathway.</text>
</comment>
<comment type="catalytic activity">
    <reaction evidence="1">
        <text>carbamoyl phosphate + L-aspartate = N-carbamoyl-L-aspartate + phosphate + H(+)</text>
        <dbReference type="Rhea" id="RHEA:20013"/>
        <dbReference type="ChEBI" id="CHEBI:15378"/>
        <dbReference type="ChEBI" id="CHEBI:29991"/>
        <dbReference type="ChEBI" id="CHEBI:32814"/>
        <dbReference type="ChEBI" id="CHEBI:43474"/>
        <dbReference type="ChEBI" id="CHEBI:58228"/>
        <dbReference type="EC" id="2.1.3.2"/>
    </reaction>
</comment>
<comment type="pathway">
    <text evidence="1">Pyrimidine metabolism; UMP biosynthesis via de novo pathway; (S)-dihydroorotate from bicarbonate: step 2/3.</text>
</comment>
<comment type="subunit">
    <text evidence="1">Heterododecamer (2C3:3R2) of six catalytic PyrB chains organized as two trimers (C3), and six regulatory PyrI chains organized as three dimers (R2).</text>
</comment>
<comment type="similarity">
    <text evidence="1">Belongs to the aspartate/ornithine carbamoyltransferase superfamily. ATCase family.</text>
</comment>